<gene>
    <name evidence="1" type="primary">MT-ATP8</name>
    <name type="synonym">ATP8</name>
    <name type="synonym">ATPASE8</name>
    <name type="synonym">MTATP8</name>
</gene>
<feature type="chain" id="PRO_0000195586" description="ATP synthase F(0) complex subunit 8">
    <location>
        <begin position="1"/>
        <end position="55"/>
    </location>
</feature>
<feature type="transmembrane region" description="Helical" evidence="3">
    <location>
        <begin position="4"/>
        <end position="24"/>
    </location>
</feature>
<accession>O79405</accession>
<proteinExistence type="inferred from homology"/>
<organism>
    <name type="scientific">Scyliorhinus canicula</name>
    <name type="common">Small-spotted catshark</name>
    <name type="synonym">Squalus canicula</name>
    <dbReference type="NCBI Taxonomy" id="7830"/>
    <lineage>
        <taxon>Eukaryota</taxon>
        <taxon>Metazoa</taxon>
        <taxon>Chordata</taxon>
        <taxon>Craniata</taxon>
        <taxon>Vertebrata</taxon>
        <taxon>Chondrichthyes</taxon>
        <taxon>Elasmobranchii</taxon>
        <taxon>Galeomorphii</taxon>
        <taxon>Galeoidea</taxon>
        <taxon>Carcharhiniformes</taxon>
        <taxon>Scyliorhinidae</taxon>
        <taxon>Scyliorhinus</taxon>
    </lineage>
</organism>
<keyword id="KW-0066">ATP synthesis</keyword>
<keyword id="KW-0138">CF(0)</keyword>
<keyword id="KW-0375">Hydrogen ion transport</keyword>
<keyword id="KW-0406">Ion transport</keyword>
<keyword id="KW-0472">Membrane</keyword>
<keyword id="KW-0496">Mitochondrion</keyword>
<keyword id="KW-0812">Transmembrane</keyword>
<keyword id="KW-1133">Transmembrane helix</keyword>
<keyword id="KW-0813">Transport</keyword>
<dbReference type="EMBL" id="Y16067">
    <property type="protein sequence ID" value="CAA76023.1"/>
    <property type="molecule type" value="Genomic_DNA"/>
</dbReference>
<dbReference type="PIR" id="T11304">
    <property type="entry name" value="T11304"/>
</dbReference>
<dbReference type="RefSeq" id="NP_007618.1">
    <property type="nucleotide sequence ID" value="NC_001950.1"/>
</dbReference>
<dbReference type="SMR" id="O79405"/>
<dbReference type="GeneID" id="808295"/>
<dbReference type="CTD" id="4509"/>
<dbReference type="OrthoDB" id="8734014at2759"/>
<dbReference type="GO" id="GO:0031966">
    <property type="term" value="C:mitochondrial membrane"/>
    <property type="evidence" value="ECO:0007669"/>
    <property type="project" value="UniProtKB-SubCell"/>
</dbReference>
<dbReference type="GO" id="GO:0045259">
    <property type="term" value="C:proton-transporting ATP synthase complex"/>
    <property type="evidence" value="ECO:0007669"/>
    <property type="project" value="UniProtKB-KW"/>
</dbReference>
<dbReference type="GO" id="GO:0015078">
    <property type="term" value="F:proton transmembrane transporter activity"/>
    <property type="evidence" value="ECO:0007669"/>
    <property type="project" value="InterPro"/>
</dbReference>
<dbReference type="GO" id="GO:0015986">
    <property type="term" value="P:proton motive force-driven ATP synthesis"/>
    <property type="evidence" value="ECO:0007669"/>
    <property type="project" value="InterPro"/>
</dbReference>
<dbReference type="InterPro" id="IPR001421">
    <property type="entry name" value="ATP8_metazoa"/>
</dbReference>
<dbReference type="InterPro" id="IPR050635">
    <property type="entry name" value="ATPase_protein_8"/>
</dbReference>
<dbReference type="PANTHER" id="PTHR39937">
    <property type="entry name" value="ATP SYNTHASE PROTEIN 8"/>
    <property type="match status" value="1"/>
</dbReference>
<dbReference type="PANTHER" id="PTHR39937:SF1">
    <property type="entry name" value="ATP SYNTHASE PROTEIN 8"/>
    <property type="match status" value="1"/>
</dbReference>
<dbReference type="Pfam" id="PF00895">
    <property type="entry name" value="ATP-synt_8"/>
    <property type="match status" value="1"/>
</dbReference>
<comment type="function">
    <text evidence="1 2">Subunit 8, of the mitochondrial membrane ATP synthase complex (F(1)F(0) ATP synthase or Complex V) that produces ATP from ADP in the presence of a proton gradient across the membrane which is generated by electron transport complexes of the respiratory chain. ATP synthase complex consist of a soluble F(1) head domain - the catalytic core - and a membrane F(1) domain - the membrane proton channel. These two domains are linked by a central stalk rotating inside the F(1) region and a stationary peripheral stalk. During catalysis, ATP synthesis in the catalytic domain of F(1) is coupled via a rotary mechanism of the central stalk subunits to proton translocation (By similarity). In vivo, can only synthesize ATP although its ATP hydrolase activity can be activated artificially in vitro (By similarity). Part of the complex F(0) domain (By similarity).</text>
</comment>
<comment type="subunit">
    <text evidence="1">Component of the ATP synthase complex composed at least of ATP5F1A/subunit alpha, ATP5F1B/subunit beta, ATP5MC1/subunit c (homooctomer), MT-ATP6/subunit a, MT-ATP8/subunit 8, ATP5ME/subunit e, ATP5MF/subunit f, ATP5MG/subunit g, ATP5MK/subunit k, ATP5MJ/subunit j, ATP5F1C/subunit gamma, ATP5F1D/subunit delta, ATP5F1E/subunit epsilon, ATP5PF/subunit F6, ATP5PB/subunit b, ATP5PD/subunit d, ATP5PO/subunit OSCP. ATP synthase complex consists of a soluble F(1) head domain (subunits alpha(3) and beta(3)) - the catalytic core - and a membrane F(0) domain - the membrane proton channel (subunits c, a, 8, e, f, g, k and j). These two domains are linked by a central stalk (subunits gamma, delta, and epsilon) rotating inside the F1 region and a stationary peripheral stalk (subunits F6, b, d, and OSCP).</text>
</comment>
<comment type="subcellular location">
    <subcellularLocation>
        <location>Mitochondrion membrane</location>
        <topology>Single-pass membrane protein</topology>
    </subcellularLocation>
</comment>
<comment type="similarity">
    <text evidence="4">Belongs to the ATPase protein 8 family.</text>
</comment>
<evidence type="ECO:0000250" key="1">
    <source>
        <dbReference type="UniProtKB" id="P03928"/>
    </source>
</evidence>
<evidence type="ECO:0000250" key="2">
    <source>
        <dbReference type="UniProtKB" id="P19483"/>
    </source>
</evidence>
<evidence type="ECO:0000255" key="3"/>
<evidence type="ECO:0000305" key="4"/>
<reference key="1">
    <citation type="journal article" date="1998" name="Genetics">
        <title>The complete nucleotide sequence of the mitochondrial DNA of the dogfish, Scyliorhinus canicula.</title>
        <authorList>
            <person name="Delarbre C."/>
            <person name="Spruyt N."/>
            <person name="Delmarre C."/>
            <person name="Gallut C."/>
            <person name="Barriel V."/>
            <person name="Janvier P."/>
            <person name="Laudet V."/>
            <person name="Gachelin G."/>
        </authorList>
    </citation>
    <scope>NUCLEOTIDE SEQUENCE [GENOMIC DNA]</scope>
    <source>
        <tissue>Muscle</tissue>
    </source>
</reference>
<name>ATP8_SCYCA</name>
<geneLocation type="mitochondrion"/>
<protein>
    <recommendedName>
        <fullName evidence="1">ATP synthase F(0) complex subunit 8</fullName>
    </recommendedName>
    <alternativeName>
        <fullName>A6L</fullName>
    </alternativeName>
    <alternativeName>
        <fullName>F-ATPase subunit 8</fullName>
    </alternativeName>
</protein>
<sequence length="55" mass="6607">MPQLNPSPWFIILLFSWVIFMVILPNKVMNHLFNNEPALKSTEKSKPDPWNWPWL</sequence>